<dbReference type="EMBL" id="AE015927">
    <property type="protein sequence ID" value="AAO37052.1"/>
    <property type="molecule type" value="Genomic_DNA"/>
</dbReference>
<dbReference type="RefSeq" id="WP_011100713.1">
    <property type="nucleotide sequence ID" value="NC_004557.1"/>
</dbReference>
<dbReference type="SMR" id="Q890P3"/>
<dbReference type="STRING" id="212717.CTC_02596"/>
<dbReference type="GeneID" id="24254561"/>
<dbReference type="KEGG" id="ctc:CTC_02596"/>
<dbReference type="HOGENOM" id="CLU_058591_0_2_9"/>
<dbReference type="OrthoDB" id="9806396at2"/>
<dbReference type="Proteomes" id="UP000001412">
    <property type="component" value="Chromosome"/>
</dbReference>
<dbReference type="GO" id="GO:0022627">
    <property type="term" value="C:cytosolic small ribosomal subunit"/>
    <property type="evidence" value="ECO:0007669"/>
    <property type="project" value="TreeGrafter"/>
</dbReference>
<dbReference type="GO" id="GO:0003729">
    <property type="term" value="F:mRNA binding"/>
    <property type="evidence" value="ECO:0007669"/>
    <property type="project" value="UniProtKB-UniRule"/>
</dbReference>
<dbReference type="GO" id="GO:0019843">
    <property type="term" value="F:rRNA binding"/>
    <property type="evidence" value="ECO:0007669"/>
    <property type="project" value="UniProtKB-UniRule"/>
</dbReference>
<dbReference type="GO" id="GO:0003735">
    <property type="term" value="F:structural constituent of ribosome"/>
    <property type="evidence" value="ECO:0007669"/>
    <property type="project" value="InterPro"/>
</dbReference>
<dbReference type="GO" id="GO:0006412">
    <property type="term" value="P:translation"/>
    <property type="evidence" value="ECO:0007669"/>
    <property type="project" value="UniProtKB-UniRule"/>
</dbReference>
<dbReference type="CDD" id="cd02412">
    <property type="entry name" value="KH-II_30S_S3"/>
    <property type="match status" value="1"/>
</dbReference>
<dbReference type="FunFam" id="3.30.1140.32:FF:000002">
    <property type="entry name" value="30S ribosomal protein S3"/>
    <property type="match status" value="1"/>
</dbReference>
<dbReference type="FunFam" id="3.30.300.20:FF:000001">
    <property type="entry name" value="30S ribosomal protein S3"/>
    <property type="match status" value="1"/>
</dbReference>
<dbReference type="Gene3D" id="3.30.300.20">
    <property type="match status" value="1"/>
</dbReference>
<dbReference type="Gene3D" id="3.30.1140.32">
    <property type="entry name" value="Ribosomal protein S3, C-terminal domain"/>
    <property type="match status" value="1"/>
</dbReference>
<dbReference type="HAMAP" id="MF_01309_B">
    <property type="entry name" value="Ribosomal_uS3_B"/>
    <property type="match status" value="1"/>
</dbReference>
<dbReference type="InterPro" id="IPR004087">
    <property type="entry name" value="KH_dom"/>
</dbReference>
<dbReference type="InterPro" id="IPR015946">
    <property type="entry name" value="KH_dom-like_a/b"/>
</dbReference>
<dbReference type="InterPro" id="IPR004044">
    <property type="entry name" value="KH_dom_type_2"/>
</dbReference>
<dbReference type="InterPro" id="IPR009019">
    <property type="entry name" value="KH_sf_prok-type"/>
</dbReference>
<dbReference type="InterPro" id="IPR036419">
    <property type="entry name" value="Ribosomal_S3_C_sf"/>
</dbReference>
<dbReference type="InterPro" id="IPR005704">
    <property type="entry name" value="Ribosomal_uS3_bac-typ"/>
</dbReference>
<dbReference type="InterPro" id="IPR001351">
    <property type="entry name" value="Ribosomal_uS3_C"/>
</dbReference>
<dbReference type="InterPro" id="IPR018280">
    <property type="entry name" value="Ribosomal_uS3_CS"/>
</dbReference>
<dbReference type="NCBIfam" id="TIGR01009">
    <property type="entry name" value="rpsC_bact"/>
    <property type="match status" value="1"/>
</dbReference>
<dbReference type="PANTHER" id="PTHR11760">
    <property type="entry name" value="30S/40S RIBOSOMAL PROTEIN S3"/>
    <property type="match status" value="1"/>
</dbReference>
<dbReference type="PANTHER" id="PTHR11760:SF19">
    <property type="entry name" value="SMALL RIBOSOMAL SUBUNIT PROTEIN US3C"/>
    <property type="match status" value="1"/>
</dbReference>
<dbReference type="Pfam" id="PF07650">
    <property type="entry name" value="KH_2"/>
    <property type="match status" value="1"/>
</dbReference>
<dbReference type="Pfam" id="PF00189">
    <property type="entry name" value="Ribosomal_S3_C"/>
    <property type="match status" value="1"/>
</dbReference>
<dbReference type="SMART" id="SM00322">
    <property type="entry name" value="KH"/>
    <property type="match status" value="1"/>
</dbReference>
<dbReference type="SUPFAM" id="SSF54814">
    <property type="entry name" value="Prokaryotic type KH domain (KH-domain type II)"/>
    <property type="match status" value="1"/>
</dbReference>
<dbReference type="SUPFAM" id="SSF54821">
    <property type="entry name" value="Ribosomal protein S3 C-terminal domain"/>
    <property type="match status" value="1"/>
</dbReference>
<dbReference type="PROSITE" id="PS50823">
    <property type="entry name" value="KH_TYPE_2"/>
    <property type="match status" value="1"/>
</dbReference>
<dbReference type="PROSITE" id="PS00548">
    <property type="entry name" value="RIBOSOMAL_S3"/>
    <property type="match status" value="1"/>
</dbReference>
<accession>Q890P3</accession>
<proteinExistence type="inferred from homology"/>
<protein>
    <recommendedName>
        <fullName evidence="1">Small ribosomal subunit protein uS3</fullName>
    </recommendedName>
    <alternativeName>
        <fullName evidence="2">30S ribosomal protein S3</fullName>
    </alternativeName>
</protein>
<sequence>MGQKVHPHGLRVGVIKDWDAKWYADKKNFSDNLVEDNNIRNFVKKKVYAAGISKIEIERAGKRVKLNIYTAKPGMVIGKGGQGIEALKGELKNIVSDNKNILINIVEVKSAETDAQLMAENVAQQLEKRISFRRAMKQTIQRAMKSGIKGVKTACSGRLGGADIARTEFYHEGTIPLQTLRADIDYGFAEADTTYGKIGVKVWVYKGEVLPAKKEVKEEVNA</sequence>
<evidence type="ECO:0000255" key="1">
    <source>
        <dbReference type="HAMAP-Rule" id="MF_01309"/>
    </source>
</evidence>
<evidence type="ECO:0000305" key="2"/>
<reference key="1">
    <citation type="journal article" date="2003" name="Proc. Natl. Acad. Sci. U.S.A.">
        <title>The genome sequence of Clostridium tetani, the causative agent of tetanus disease.</title>
        <authorList>
            <person name="Brueggemann H."/>
            <person name="Baeumer S."/>
            <person name="Fricke W.F."/>
            <person name="Wiezer A."/>
            <person name="Liesegang H."/>
            <person name="Decker I."/>
            <person name="Herzberg C."/>
            <person name="Martinez-Arias R."/>
            <person name="Merkl R."/>
            <person name="Henne A."/>
            <person name="Gottschalk G."/>
        </authorList>
    </citation>
    <scope>NUCLEOTIDE SEQUENCE [LARGE SCALE GENOMIC DNA]</scope>
    <source>
        <strain>Massachusetts / E88</strain>
    </source>
</reference>
<name>RS3_CLOTE</name>
<comment type="function">
    <text evidence="1">Binds the lower part of the 30S subunit head. Binds mRNA in the 70S ribosome, positioning it for translation.</text>
</comment>
<comment type="subunit">
    <text evidence="1">Part of the 30S ribosomal subunit. Forms a tight complex with proteins S10 and S14.</text>
</comment>
<comment type="similarity">
    <text evidence="1">Belongs to the universal ribosomal protein uS3 family.</text>
</comment>
<gene>
    <name evidence="1" type="primary">rpsC</name>
    <name type="ordered locus">CTC_02596</name>
</gene>
<organism>
    <name type="scientific">Clostridium tetani (strain Massachusetts / E88)</name>
    <dbReference type="NCBI Taxonomy" id="212717"/>
    <lineage>
        <taxon>Bacteria</taxon>
        <taxon>Bacillati</taxon>
        <taxon>Bacillota</taxon>
        <taxon>Clostridia</taxon>
        <taxon>Eubacteriales</taxon>
        <taxon>Clostridiaceae</taxon>
        <taxon>Clostridium</taxon>
    </lineage>
</organism>
<feature type="chain" id="PRO_0000130105" description="Small ribosomal subunit protein uS3">
    <location>
        <begin position="1"/>
        <end position="222"/>
    </location>
</feature>
<feature type="domain" description="KH type-2" evidence="1">
    <location>
        <begin position="39"/>
        <end position="109"/>
    </location>
</feature>
<keyword id="KW-1185">Reference proteome</keyword>
<keyword id="KW-0687">Ribonucleoprotein</keyword>
<keyword id="KW-0689">Ribosomal protein</keyword>
<keyword id="KW-0694">RNA-binding</keyword>
<keyword id="KW-0699">rRNA-binding</keyword>